<keyword id="KW-1185">Reference proteome</keyword>
<comment type="similarity">
    <text evidence="1">Belongs to the elongation factor P family.</text>
</comment>
<protein>
    <recommendedName>
        <fullName evidence="1">Elongation factor P-like protein</fullName>
    </recommendedName>
</protein>
<name>EFPL_SHESH</name>
<dbReference type="EMBL" id="CP000821">
    <property type="protein sequence ID" value="ABV36417.1"/>
    <property type="molecule type" value="Genomic_DNA"/>
</dbReference>
<dbReference type="RefSeq" id="WP_012142153.1">
    <property type="nucleotide sequence ID" value="NC_009831.1"/>
</dbReference>
<dbReference type="SMR" id="A8FU94"/>
<dbReference type="STRING" id="425104.Ssed_1806"/>
<dbReference type="KEGG" id="sse:Ssed_1806"/>
<dbReference type="eggNOG" id="COG0231">
    <property type="taxonomic scope" value="Bacteria"/>
</dbReference>
<dbReference type="HOGENOM" id="CLU_074944_2_0_6"/>
<dbReference type="OrthoDB" id="5599402at2"/>
<dbReference type="Proteomes" id="UP000002015">
    <property type="component" value="Chromosome"/>
</dbReference>
<dbReference type="GO" id="GO:0005737">
    <property type="term" value="C:cytoplasm"/>
    <property type="evidence" value="ECO:0007669"/>
    <property type="project" value="InterPro"/>
</dbReference>
<dbReference type="GO" id="GO:0003746">
    <property type="term" value="F:translation elongation factor activity"/>
    <property type="evidence" value="ECO:0007669"/>
    <property type="project" value="UniProtKB-UniRule"/>
</dbReference>
<dbReference type="GO" id="GO:0043043">
    <property type="term" value="P:peptide biosynthetic process"/>
    <property type="evidence" value="ECO:0007669"/>
    <property type="project" value="InterPro"/>
</dbReference>
<dbReference type="CDD" id="cd04470">
    <property type="entry name" value="S1_EF-P_repeat_1"/>
    <property type="match status" value="1"/>
</dbReference>
<dbReference type="CDD" id="cd05794">
    <property type="entry name" value="S1_EF-P_repeat_2"/>
    <property type="match status" value="1"/>
</dbReference>
<dbReference type="FunFam" id="2.40.50.140:FF:000004">
    <property type="entry name" value="Elongation factor P"/>
    <property type="match status" value="1"/>
</dbReference>
<dbReference type="Gene3D" id="2.30.30.30">
    <property type="match status" value="1"/>
</dbReference>
<dbReference type="Gene3D" id="2.40.50.140">
    <property type="entry name" value="Nucleic acid-binding proteins"/>
    <property type="match status" value="2"/>
</dbReference>
<dbReference type="HAMAP" id="MF_00646">
    <property type="entry name" value="EFP"/>
    <property type="match status" value="1"/>
</dbReference>
<dbReference type="InterPro" id="IPR015365">
    <property type="entry name" value="Elong-fact-P_C"/>
</dbReference>
<dbReference type="InterPro" id="IPR012340">
    <property type="entry name" value="NA-bd_OB-fold"/>
</dbReference>
<dbReference type="InterPro" id="IPR014722">
    <property type="entry name" value="Rib_uL2_dom2"/>
</dbReference>
<dbReference type="InterPro" id="IPR020599">
    <property type="entry name" value="Transl_elong_fac_P/YeiP"/>
</dbReference>
<dbReference type="InterPro" id="IPR013185">
    <property type="entry name" value="Transl_elong_KOW-like"/>
</dbReference>
<dbReference type="InterPro" id="IPR011897">
    <property type="entry name" value="Transl_elong_p-like_YeiP"/>
</dbReference>
<dbReference type="InterPro" id="IPR001059">
    <property type="entry name" value="Transl_elong_P/YeiP_cen"/>
</dbReference>
<dbReference type="InterPro" id="IPR013852">
    <property type="entry name" value="Transl_elong_P/YeiP_CS"/>
</dbReference>
<dbReference type="InterPro" id="IPR008991">
    <property type="entry name" value="Translation_prot_SH3-like_sf"/>
</dbReference>
<dbReference type="NCBIfam" id="NF001810">
    <property type="entry name" value="PRK00529.1"/>
    <property type="match status" value="1"/>
</dbReference>
<dbReference type="NCBIfam" id="NF003392">
    <property type="entry name" value="PRK04542.1"/>
    <property type="match status" value="1"/>
</dbReference>
<dbReference type="NCBIfam" id="TIGR02178">
    <property type="entry name" value="yeiP"/>
    <property type="match status" value="1"/>
</dbReference>
<dbReference type="PANTHER" id="PTHR30053">
    <property type="entry name" value="ELONGATION FACTOR P"/>
    <property type="match status" value="1"/>
</dbReference>
<dbReference type="PANTHER" id="PTHR30053:SF14">
    <property type="entry name" value="TRANSLATION ELONGATION FACTOR KOW-LIKE DOMAIN-CONTAINING PROTEIN"/>
    <property type="match status" value="1"/>
</dbReference>
<dbReference type="Pfam" id="PF01132">
    <property type="entry name" value="EFP"/>
    <property type="match status" value="1"/>
</dbReference>
<dbReference type="Pfam" id="PF08207">
    <property type="entry name" value="EFP_N"/>
    <property type="match status" value="1"/>
</dbReference>
<dbReference type="Pfam" id="PF09285">
    <property type="entry name" value="Elong-fact-P_C"/>
    <property type="match status" value="1"/>
</dbReference>
<dbReference type="PIRSF" id="PIRSF005901">
    <property type="entry name" value="EF-P"/>
    <property type="match status" value="1"/>
</dbReference>
<dbReference type="SMART" id="SM01185">
    <property type="entry name" value="EFP"/>
    <property type="match status" value="1"/>
</dbReference>
<dbReference type="SMART" id="SM00841">
    <property type="entry name" value="Elong-fact-P_C"/>
    <property type="match status" value="1"/>
</dbReference>
<dbReference type="SUPFAM" id="SSF50249">
    <property type="entry name" value="Nucleic acid-binding proteins"/>
    <property type="match status" value="2"/>
</dbReference>
<dbReference type="SUPFAM" id="SSF50104">
    <property type="entry name" value="Translation proteins SH3-like domain"/>
    <property type="match status" value="1"/>
</dbReference>
<dbReference type="PROSITE" id="PS01275">
    <property type="entry name" value="EFP"/>
    <property type="match status" value="1"/>
</dbReference>
<gene>
    <name type="ordered locus">Ssed_1806</name>
</gene>
<proteinExistence type="inferred from homology"/>
<accession>A8FU94</accession>
<evidence type="ECO:0000255" key="1">
    <source>
        <dbReference type="HAMAP-Rule" id="MF_00646"/>
    </source>
</evidence>
<reference key="1">
    <citation type="submission" date="2007-08" db="EMBL/GenBank/DDBJ databases">
        <title>Complete sequence of Shewanella sediminis HAW-EB3.</title>
        <authorList>
            <consortium name="US DOE Joint Genome Institute"/>
            <person name="Copeland A."/>
            <person name="Lucas S."/>
            <person name="Lapidus A."/>
            <person name="Barry K."/>
            <person name="Glavina del Rio T."/>
            <person name="Dalin E."/>
            <person name="Tice H."/>
            <person name="Pitluck S."/>
            <person name="Chertkov O."/>
            <person name="Brettin T."/>
            <person name="Bruce D."/>
            <person name="Detter J.C."/>
            <person name="Han C."/>
            <person name="Schmutz J."/>
            <person name="Larimer F."/>
            <person name="Land M."/>
            <person name="Hauser L."/>
            <person name="Kyrpides N."/>
            <person name="Kim E."/>
            <person name="Zhao J.-S."/>
            <person name="Richardson P."/>
        </authorList>
    </citation>
    <scope>NUCLEOTIDE SEQUENCE [LARGE SCALE GENOMIC DNA]</scope>
    <source>
        <strain>HAW-EB3</strain>
    </source>
</reference>
<feature type="chain" id="PRO_0000384924" description="Elongation factor P-like protein">
    <location>
        <begin position="1"/>
        <end position="191"/>
    </location>
</feature>
<organism>
    <name type="scientific">Shewanella sediminis (strain HAW-EB3)</name>
    <dbReference type="NCBI Taxonomy" id="425104"/>
    <lineage>
        <taxon>Bacteria</taxon>
        <taxon>Pseudomonadati</taxon>
        <taxon>Pseudomonadota</taxon>
        <taxon>Gammaproteobacteria</taxon>
        <taxon>Alteromonadales</taxon>
        <taxon>Shewanellaceae</taxon>
        <taxon>Shewanella</taxon>
    </lineage>
</organism>
<sequence>MPKASEVKKNTAIEFNNNVYLIRDIERSVPQGRSGGSLYRMRMYDVATGSKLDHTFKADEMINLADLSRHEVSFSYIDGDEYVFMDIADYTPYHFNKDSIADEILFINEETQGLQVLTVDGTPVAIELPANVELVIVETDPSIKGASASARTKPAILSTGLSVQVPEYIANGEKIKINTAEHKFMSRADSK</sequence>